<reference key="1">
    <citation type="journal article" date="2009" name="Plant J.">
        <title>A UVB-hypersensitive mutant in Arabidopsis thaliana is defective in the DNA damage response.</title>
        <authorList>
            <person name="Sakamoto A.N."/>
            <person name="Lan V.T.T."/>
            <person name="Puripunyavanich V."/>
            <person name="Hase Y."/>
            <person name="Yokota Y."/>
            <person name="Shikazono N."/>
            <person name="Nakagawa M."/>
            <person name="Narumi I."/>
            <person name="Tanaka A."/>
        </authorList>
    </citation>
    <scope>NUCLEOTIDE SEQUENCE [MRNA] (ISOFORM 1)</scope>
    <scope>FUNCTION</scope>
    <scope>DISRUPTION PHENOTYPE</scope>
    <scope>SUBUNIT</scope>
    <source>
        <strain>cv. Columbia</strain>
    </source>
</reference>
<reference key="2">
    <citation type="journal article" date="1998" name="DNA Res.">
        <title>Structural analysis of Arabidopsis thaliana chromosome 5. VI. Sequence features of the regions of 1,367,185 bp covered by 19 physically assigned P1 and TAC clones.</title>
        <authorList>
            <person name="Kotani H."/>
            <person name="Nakamura Y."/>
            <person name="Sato S."/>
            <person name="Asamizu E."/>
            <person name="Kaneko T."/>
            <person name="Miyajima N."/>
            <person name="Tabata S."/>
        </authorList>
    </citation>
    <scope>NUCLEOTIDE SEQUENCE [LARGE SCALE GENOMIC DNA]</scope>
    <source>
        <strain>cv. Columbia</strain>
    </source>
</reference>
<reference key="3">
    <citation type="journal article" date="2017" name="Plant J.">
        <title>Araport11: a complete reannotation of the Arabidopsis thaliana reference genome.</title>
        <authorList>
            <person name="Cheng C.Y."/>
            <person name="Krishnakumar V."/>
            <person name="Chan A.P."/>
            <person name="Thibaud-Nissen F."/>
            <person name="Schobel S."/>
            <person name="Town C.D."/>
        </authorList>
    </citation>
    <scope>GENOME REANNOTATION</scope>
    <source>
        <strain>cv. Columbia</strain>
    </source>
</reference>
<reference key="4">
    <citation type="journal article" date="2009" name="Plant J.">
        <title>The Arabidopsis ATRIP ortholog is required for a programmed response to replication inhibitors.</title>
        <authorList>
            <person name="Sweeney P.R."/>
            <person name="Britt A.B."/>
            <person name="Culligan K.M."/>
        </authorList>
    </citation>
    <scope>FUNCTION</scope>
    <scope>DISRUPTION PHENOTYPE</scope>
    <source>
        <strain>cv. Columbia</strain>
    </source>
</reference>
<reference key="5">
    <citation type="journal article" date="2017" name="Plant Cell Environ.">
        <title>SUV2, which encodes an ATR-related cell cycle checkpoint and putative plant ATRIP, is required for aluminium-dependent root growth inhibition in Arabidopsis.</title>
        <authorList>
            <person name="Sjogren C.A."/>
            <person name="Larsen P.B."/>
        </authorList>
    </citation>
    <scope>FUNCTION</scope>
    <scope>DISRUPTION PHENOTYPE</scope>
    <scope>PHOSPHORYLATION</scope>
    <scope>TISSUE SPECIFICITY</scope>
    <scope>SUBCELLULAR LOCATION</scope>
    <source>
        <strain>cv. Columbia</strain>
    </source>
</reference>
<feature type="chain" id="PRO_0000447698" description="Protein SENSITIVE TO UV 2">
    <location>
        <begin position="1"/>
        <end position="646"/>
    </location>
</feature>
<feature type="domain" description="Phosphatase tensin-type" evidence="2">
    <location>
        <begin position="376"/>
        <end position="646"/>
    </location>
</feature>
<feature type="region of interest" description="Disordered" evidence="4">
    <location>
        <begin position="42"/>
        <end position="70"/>
    </location>
</feature>
<feature type="coiled-coil region" evidence="1">
    <location>
        <begin position="123"/>
        <end position="157"/>
    </location>
</feature>
<feature type="short sequence motif" description="Nuclear localization signal" evidence="3">
    <location>
        <begin position="119"/>
        <end position="126"/>
    </location>
</feature>
<feature type="compositionally biased region" description="Polar residues" evidence="4">
    <location>
        <begin position="48"/>
        <end position="70"/>
    </location>
</feature>
<feature type="site" description="Reactive bond" evidence="11">
    <location>
        <begin position="579"/>
        <end position="580"/>
    </location>
</feature>
<feature type="splice variant" id="VSP_060239" description="In isoform 2.">
    <original>TLLMREILILLNRLVSGLSSSATILKELTTSRDMASLTVDAATRLSRKRNLLGKPESSVERMRNTEIMDLARIFKKRVFAFLGDNT</original>
    <variation>FILHRGDLQIENL</variation>
    <location>
        <begin position="560"/>
        <end position="645"/>
    </location>
</feature>
<accession>C8KI33</accession>
<accession>A0A1P8BEL4</accession>
<accession>Q9FK80</accession>
<name>SUV2_ARATH</name>
<protein>
    <recommendedName>
        <fullName evidence="9 10">Protein SENSITIVE TO UV 2</fullName>
    </recommendedName>
    <alternativeName>
        <fullName evidence="8 9">ATR interacting protein</fullName>
        <shortName evidence="8 9">AtATRIP</shortName>
    </alternativeName>
    <alternativeName>
        <fullName evidence="8">Protein HYDROXYUREA-SENSITIVE 2</fullName>
    </alternativeName>
</protein>
<sequence>MSGNDEEFNDEFLLAIDSIETTLKKADMYRPLPPPYLPTFLPAPPPSTKISSSLSHPMQLQSSAGQQRKQIQVPDPFLSYSPPRELSQRVVSGFNDALMDYSNSTVVTAAKPISPTTSNRRCDSEKDLEIDRLKKELERVSKQLLDVEQECSQLKKGKSKETESRNLCADDNRGQCSTVHASKRIDLEPDVATSSVNHRENDSRMALDDKRSFKTTGVQADVANHSDLSKKLLDIWRTSNYQDPRKNLISELLLACSTDLQILFSFMKISTPPQELNKQEAKTSSDRQSSKALESEKVYQLYSAVTKISYGFVNLKTLVEPLLDLCKAETAVLVHRSLRVLHVLLEHICGDEKRFEASWDANWHSLFKLMNQIASKRTEQDVKQEALSIMNIIVMSTDAYTARESFVSKEVFESISLLLRKEGGLHVRKEAIHLFYLLLNCPKLYDTFDSLHEEKNSSDTENDSEGNFFALEAFGKIFEGLADCLTSPRKTSEDLELCRNVIMILALAASSGNSGYELLSSHKLPQDSSFLMLILHLLVAEIDSESTEFHPKAEIFKARTLLMREILILLNRLVSGLSSSATILKELTTSRDMASLTVDAATRLSRKRNLLGKPESSVERMRNTEIMDLARIFKKRVFAFLGDNTI</sequence>
<evidence type="ECO:0000255" key="1"/>
<evidence type="ECO:0000255" key="2">
    <source>
        <dbReference type="PROSITE-ProRule" id="PRU00590"/>
    </source>
</evidence>
<evidence type="ECO:0000255" key="3">
    <source>
        <dbReference type="PROSITE-ProRule" id="PRU00768"/>
    </source>
</evidence>
<evidence type="ECO:0000256" key="4">
    <source>
        <dbReference type="SAM" id="MobiDB-lite"/>
    </source>
</evidence>
<evidence type="ECO:0000269" key="5">
    <source>
    </source>
</evidence>
<evidence type="ECO:0000269" key="6">
    <source>
    </source>
</evidence>
<evidence type="ECO:0000269" key="7">
    <source>
    </source>
</evidence>
<evidence type="ECO:0000303" key="8">
    <source>
    </source>
</evidence>
<evidence type="ECO:0000303" key="9">
    <source>
    </source>
</evidence>
<evidence type="ECO:0000303" key="10">
    <source>
    </source>
</evidence>
<evidence type="ECO:0000305" key="11"/>
<evidence type="ECO:0000312" key="12">
    <source>
        <dbReference type="Araport" id="AT5G45610"/>
    </source>
</evidence>
<evidence type="ECO:0000312" key="13">
    <source>
        <dbReference type="EMBL" id="BAB09204.1"/>
    </source>
</evidence>
<keyword id="KW-0025">Alternative splicing</keyword>
<keyword id="KW-0175">Coiled coil</keyword>
<keyword id="KW-0963">Cytoplasm</keyword>
<keyword id="KW-0227">DNA damage</keyword>
<keyword id="KW-0378">Hydrolase</keyword>
<keyword id="KW-0539">Nucleus</keyword>
<keyword id="KW-0597">Phosphoprotein</keyword>
<keyword id="KW-0904">Protein phosphatase</keyword>
<keyword id="KW-1185">Reference proteome</keyword>
<dbReference type="EMBL" id="AB492859">
    <property type="protein sequence ID" value="BAI43377.1"/>
    <property type="molecule type" value="mRNA"/>
</dbReference>
<dbReference type="EMBL" id="AB012245">
    <property type="protein sequence ID" value="BAB09204.1"/>
    <property type="status" value="ALT_SEQ"/>
    <property type="molecule type" value="Genomic_DNA"/>
</dbReference>
<dbReference type="EMBL" id="CP002688">
    <property type="protein sequence ID" value="AED95275.1"/>
    <property type="molecule type" value="Genomic_DNA"/>
</dbReference>
<dbReference type="EMBL" id="CP002688">
    <property type="protein sequence ID" value="ANM70036.1"/>
    <property type="molecule type" value="Genomic_DNA"/>
</dbReference>
<dbReference type="RefSeq" id="NP_001331674.1">
    <molecule id="C8KI33-2"/>
    <property type="nucleotide sequence ID" value="NM_001344635.1"/>
</dbReference>
<dbReference type="RefSeq" id="NP_199374.4">
    <molecule id="C8KI33-1"/>
    <property type="nucleotide sequence ID" value="NM_123929.6"/>
</dbReference>
<dbReference type="FunCoup" id="C8KI33">
    <property type="interactions" value="642"/>
</dbReference>
<dbReference type="STRING" id="3702.C8KI33"/>
<dbReference type="GlyGen" id="C8KI33">
    <property type="glycosylation" value="2 sites, 1 O-linked glycan (1 site)"/>
</dbReference>
<dbReference type="iPTMnet" id="C8KI33"/>
<dbReference type="PaxDb" id="3702-AT5G45610.1"/>
<dbReference type="ProteomicsDB" id="185590">
    <molecule id="C8KI33-1"/>
</dbReference>
<dbReference type="EnsemblPlants" id="AT5G45610.1">
    <molecule id="C8KI33-1"/>
    <property type="protein sequence ID" value="AT5G45610.1"/>
    <property type="gene ID" value="AT5G45610"/>
</dbReference>
<dbReference type="EnsemblPlants" id="AT5G45610.2">
    <molecule id="C8KI33-2"/>
    <property type="protein sequence ID" value="AT5G45610.2"/>
    <property type="gene ID" value="AT5G45610"/>
</dbReference>
<dbReference type="GeneID" id="834601"/>
<dbReference type="Gramene" id="AT5G45610.1">
    <molecule id="C8KI33-1"/>
    <property type="protein sequence ID" value="AT5G45610.1"/>
    <property type="gene ID" value="AT5G45610"/>
</dbReference>
<dbReference type="Gramene" id="AT5G45610.2">
    <molecule id="C8KI33-2"/>
    <property type="protein sequence ID" value="AT5G45610.2"/>
    <property type="gene ID" value="AT5G45610"/>
</dbReference>
<dbReference type="KEGG" id="ath:AT5G45610"/>
<dbReference type="Araport" id="AT5G45610"/>
<dbReference type="TAIR" id="AT5G45610">
    <property type="gene designation" value="SUV2"/>
</dbReference>
<dbReference type="eggNOG" id="ENOG502QR7S">
    <property type="taxonomic scope" value="Eukaryota"/>
</dbReference>
<dbReference type="HOGENOM" id="CLU_020186_0_0_1"/>
<dbReference type="InParanoid" id="C8KI33"/>
<dbReference type="OMA" id="HMERNSH"/>
<dbReference type="PhylomeDB" id="C8KI33"/>
<dbReference type="PRO" id="PR:C8KI33"/>
<dbReference type="Proteomes" id="UP000006548">
    <property type="component" value="Chromosome 5"/>
</dbReference>
<dbReference type="ExpressionAtlas" id="C8KI33">
    <property type="expression patterns" value="baseline and differential"/>
</dbReference>
<dbReference type="GO" id="GO:0005737">
    <property type="term" value="C:cytoplasm"/>
    <property type="evidence" value="ECO:0000314"/>
    <property type="project" value="UniProtKB"/>
</dbReference>
<dbReference type="GO" id="GO:0005634">
    <property type="term" value="C:nucleus"/>
    <property type="evidence" value="ECO:0000314"/>
    <property type="project" value="UniProtKB"/>
</dbReference>
<dbReference type="GO" id="GO:0004721">
    <property type="term" value="F:phosphoprotein phosphatase activity"/>
    <property type="evidence" value="ECO:0007669"/>
    <property type="project" value="UniProtKB-KW"/>
</dbReference>
<dbReference type="GO" id="GO:0046983">
    <property type="term" value="F:protein dimerization activity"/>
    <property type="evidence" value="ECO:0000353"/>
    <property type="project" value="TAIR"/>
</dbReference>
<dbReference type="GO" id="GO:0006974">
    <property type="term" value="P:DNA damage response"/>
    <property type="evidence" value="ECO:0000315"/>
    <property type="project" value="UniProtKB"/>
</dbReference>
<dbReference type="GO" id="GO:1902751">
    <property type="term" value="P:positive regulation of cell cycle G2/M phase transition"/>
    <property type="evidence" value="ECO:0000315"/>
    <property type="project" value="TAIR"/>
</dbReference>
<dbReference type="GO" id="GO:0051726">
    <property type="term" value="P:regulation of cell cycle"/>
    <property type="evidence" value="ECO:0000315"/>
    <property type="project" value="UniProtKB"/>
</dbReference>
<dbReference type="GO" id="GO:0010044">
    <property type="term" value="P:response to aluminum ion"/>
    <property type="evidence" value="ECO:0000315"/>
    <property type="project" value="UniProtKB"/>
</dbReference>
<dbReference type="GO" id="GO:0072718">
    <property type="term" value="P:response to cisplatin"/>
    <property type="evidence" value="ECO:0000315"/>
    <property type="project" value="UniProtKB"/>
</dbReference>
<dbReference type="GO" id="GO:0010332">
    <property type="term" value="P:response to gamma radiation"/>
    <property type="evidence" value="ECO:0000315"/>
    <property type="project" value="UniProtKB"/>
</dbReference>
<dbReference type="GO" id="GO:0072710">
    <property type="term" value="P:response to hydroxyurea"/>
    <property type="evidence" value="ECO:0000315"/>
    <property type="project" value="UniProtKB"/>
</dbReference>
<dbReference type="GO" id="GO:0010212">
    <property type="term" value="P:response to ionizing radiation"/>
    <property type="evidence" value="ECO:0000315"/>
    <property type="project" value="UniProtKB"/>
</dbReference>
<dbReference type="GO" id="GO:0010224">
    <property type="term" value="P:response to UV-B"/>
    <property type="evidence" value="ECO:0000315"/>
    <property type="project" value="UniProtKB"/>
</dbReference>
<dbReference type="InterPro" id="IPR016024">
    <property type="entry name" value="ARM-type_fold"/>
</dbReference>
<dbReference type="InterPro" id="IPR044952">
    <property type="entry name" value="SUV2"/>
</dbReference>
<dbReference type="PANTHER" id="PTHR35761">
    <property type="entry name" value="ATR INTERACTING PROTEIN"/>
    <property type="match status" value="1"/>
</dbReference>
<dbReference type="PANTHER" id="PTHR35761:SF1">
    <property type="entry name" value="PROTEIN SENSITIVE TO UV 2"/>
    <property type="match status" value="1"/>
</dbReference>
<dbReference type="SUPFAM" id="SSF48371">
    <property type="entry name" value="ARM repeat"/>
    <property type="match status" value="1"/>
</dbReference>
<organism>
    <name type="scientific">Arabidopsis thaliana</name>
    <name type="common">Mouse-ear cress</name>
    <dbReference type="NCBI Taxonomy" id="3702"/>
    <lineage>
        <taxon>Eukaryota</taxon>
        <taxon>Viridiplantae</taxon>
        <taxon>Streptophyta</taxon>
        <taxon>Embryophyta</taxon>
        <taxon>Tracheophyta</taxon>
        <taxon>Spermatophyta</taxon>
        <taxon>Magnoliopsida</taxon>
        <taxon>eudicotyledons</taxon>
        <taxon>Gunneridae</taxon>
        <taxon>Pentapetalae</taxon>
        <taxon>rosids</taxon>
        <taxon>malvids</taxon>
        <taxon>Brassicales</taxon>
        <taxon>Brassicaceae</taxon>
        <taxon>Camelineae</taxon>
        <taxon>Arabidopsis</taxon>
    </lineage>
</organism>
<gene>
    <name evidence="9 10" type="primary">SUV2</name>
    <name evidence="8 9" type="synonym">ATRIP</name>
    <name evidence="8" type="synonym">HUS2</name>
    <name evidence="12" type="ordered locus">At5g45610</name>
    <name evidence="13" type="ORF">MRA19.1</name>
</gene>
<comment type="function">
    <text evidence="5 6 7">Required for tolerance to DNA-damaging and cross-linking agents such as UVB irradiation, gamma-radiation, aphidicolin, ionizing radiation and hydroxyurea (HU), cisplatin (CDDP) and mitomycin C (MMC) (PubMed:19619158, PubMed:19619159, PubMed:28556304). Involved in cell-cycle G2/M arrest in response to DNA damage (PubMed:19619158, PubMed:19619159). Required for aluminum-dependent gene regulation and root growth inhibition in an ATR-dependent manner by halting cell cycle progression and triggering loss of the quiescent center (QC) (PubMed:28556304).</text>
</comment>
<comment type="subunit">
    <text evidence="6">Forms multimers through the coiled-coil domain.</text>
</comment>
<comment type="subcellular location">
    <subcellularLocation>
        <location evidence="3 7">Nucleus</location>
    </subcellularLocation>
    <subcellularLocation>
        <location evidence="7">Cytoplasm</location>
    </subcellularLocation>
</comment>
<comment type="alternative products">
    <event type="alternative splicing"/>
    <isoform>
        <id>C8KI33-1</id>
        <name>1</name>
        <sequence type="displayed"/>
    </isoform>
    <isoform>
        <id>C8KI33-2</id>
        <name>2</name>
        <sequence type="described" ref="VSP_060239"/>
    </isoform>
</comment>
<comment type="tissue specificity">
    <text evidence="7">Accumulates throughout the root tip.</text>
</comment>
<comment type="induction">
    <text evidence="7">Becomes more restricted to the distal region of the root tip upon addition of aluminum (Al).</text>
</comment>
<comment type="PTM">
    <text evidence="7">Probably phosphorylated by ATR.</text>
</comment>
<comment type="disruption phenotype">
    <text evidence="5 6 7">Hypersensitivity to DNA-damaging agents including UVB, gamma-radiation, aphidicolin, ionizing radiation and hydroxyurea (HU) (PubMed:19619158, PubMed:19619159). Defective in cell-cycle G2/M arrest in response to DNA damage (PubMed:19619158, PubMed:19619159). Reversed extreme hypersensitivity to aluminum (Al) of the mutant als3-1, including Al-dependent terminal differentiation of the root tip and transition to endoreduplication. Increased tolerance to Al (PubMed:28556304).</text>
</comment>
<comment type="similarity">
    <text evidence="11">Belongs to the serpin family.</text>
</comment>
<comment type="sequence caution" evidence="11">
    <conflict type="erroneous gene model prediction">
        <sequence resource="EMBL-CDS" id="BAB09204"/>
    </conflict>
</comment>
<proteinExistence type="evidence at protein level"/>